<name>SYF1_KLULA</name>
<dbReference type="EMBL" id="CR382121">
    <property type="protein sequence ID" value="CAH02675.1"/>
    <property type="molecule type" value="Genomic_DNA"/>
</dbReference>
<dbReference type="RefSeq" id="XP_451087.1">
    <property type="nucleotide sequence ID" value="XM_451087.1"/>
</dbReference>
<dbReference type="SMR" id="Q6CYA2"/>
<dbReference type="FunCoup" id="Q6CYA2">
    <property type="interactions" value="1126"/>
</dbReference>
<dbReference type="STRING" id="284590.Q6CYA2"/>
<dbReference type="PaxDb" id="284590-Q6CYA2"/>
<dbReference type="KEGG" id="kla:KLLA0_A01969g"/>
<dbReference type="eggNOG" id="KOG2047">
    <property type="taxonomic scope" value="Eukaryota"/>
</dbReference>
<dbReference type="HOGENOM" id="CLU_007736_0_0_1"/>
<dbReference type="InParanoid" id="Q6CYA2"/>
<dbReference type="OMA" id="IWYNYLR"/>
<dbReference type="Proteomes" id="UP000000598">
    <property type="component" value="Chromosome A"/>
</dbReference>
<dbReference type="GO" id="GO:0071014">
    <property type="term" value="C:post-mRNA release spliceosomal complex"/>
    <property type="evidence" value="ECO:0007669"/>
    <property type="project" value="TreeGrafter"/>
</dbReference>
<dbReference type="GO" id="GO:0000974">
    <property type="term" value="C:Prp19 complex"/>
    <property type="evidence" value="ECO:0007669"/>
    <property type="project" value="TreeGrafter"/>
</dbReference>
<dbReference type="GO" id="GO:0071007">
    <property type="term" value="C:U2-type catalytic step 2 spliceosome"/>
    <property type="evidence" value="ECO:0007669"/>
    <property type="project" value="TreeGrafter"/>
</dbReference>
<dbReference type="GO" id="GO:0000349">
    <property type="term" value="P:generation of catalytic spliceosome for first transesterification step"/>
    <property type="evidence" value="ECO:0007669"/>
    <property type="project" value="TreeGrafter"/>
</dbReference>
<dbReference type="Gene3D" id="1.25.40.10">
    <property type="entry name" value="Tetratricopeptide repeat domain"/>
    <property type="match status" value="2"/>
</dbReference>
<dbReference type="InterPro" id="IPR003107">
    <property type="entry name" value="HAT"/>
</dbReference>
<dbReference type="InterPro" id="IPR055433">
    <property type="entry name" value="HAT_Syf1-like_N"/>
</dbReference>
<dbReference type="InterPro" id="IPR056350">
    <property type="entry name" value="HAT_Syf1_central"/>
</dbReference>
<dbReference type="InterPro" id="IPR055430">
    <property type="entry name" value="HAT_Syf1_CNRKL1_C"/>
</dbReference>
<dbReference type="InterPro" id="IPR045075">
    <property type="entry name" value="Syf1-like"/>
</dbReference>
<dbReference type="InterPro" id="IPR011990">
    <property type="entry name" value="TPR-like_helical_dom_sf"/>
</dbReference>
<dbReference type="PANTHER" id="PTHR11246">
    <property type="entry name" value="PRE-MRNA SPLICING FACTOR"/>
    <property type="match status" value="1"/>
</dbReference>
<dbReference type="PANTHER" id="PTHR11246:SF5">
    <property type="entry name" value="PRE-MRNA-SPLICING FACTOR SYF1"/>
    <property type="match status" value="1"/>
</dbReference>
<dbReference type="Pfam" id="PF23231">
    <property type="entry name" value="HAT_Syf1_CNRKL1_C"/>
    <property type="match status" value="1"/>
</dbReference>
<dbReference type="Pfam" id="PF23233">
    <property type="entry name" value="HAT_Syf1_CNRKL1_N"/>
    <property type="match status" value="1"/>
</dbReference>
<dbReference type="Pfam" id="PF23220">
    <property type="entry name" value="HAT_Syf1_M"/>
    <property type="match status" value="1"/>
</dbReference>
<dbReference type="SMART" id="SM00386">
    <property type="entry name" value="HAT"/>
    <property type="match status" value="9"/>
</dbReference>
<dbReference type="SUPFAM" id="SSF48452">
    <property type="entry name" value="TPR-like"/>
    <property type="match status" value="2"/>
</dbReference>
<feature type="chain" id="PRO_0000205731" description="Pre-mRNA-splicing factor SYF1">
    <location>
        <begin position="1"/>
        <end position="798"/>
    </location>
</feature>
<feature type="repeat" description="HAT 1">
    <location>
        <begin position="5"/>
        <end position="37"/>
    </location>
</feature>
<feature type="repeat" description="HAT 2">
    <location>
        <begin position="39"/>
        <end position="71"/>
    </location>
</feature>
<feature type="repeat" description="HAT 3">
    <location>
        <begin position="83"/>
        <end position="115"/>
    </location>
</feature>
<feature type="repeat" description="HAT 4">
    <location>
        <begin position="117"/>
        <end position="151"/>
    </location>
</feature>
<feature type="repeat" description="HAT 5">
    <location>
        <begin position="392"/>
        <end position="424"/>
    </location>
</feature>
<feature type="repeat" description="HAT 6">
    <location>
        <begin position="428"/>
        <end position="460"/>
    </location>
</feature>
<feature type="repeat" description="HAT 7">
    <location>
        <begin position="478"/>
        <end position="514"/>
    </location>
</feature>
<feature type="repeat" description="HAT 8">
    <location>
        <begin position="516"/>
        <end position="548"/>
    </location>
</feature>
<feature type="repeat" description="HAT 9">
    <location>
        <begin position="550"/>
        <end position="584"/>
    </location>
</feature>
<feature type="repeat" description="HAT 10">
    <location>
        <begin position="587"/>
        <end position="622"/>
    </location>
</feature>
<feature type="repeat" description="HAT 11">
    <location>
        <begin position="661"/>
        <end position="695"/>
    </location>
</feature>
<feature type="repeat" description="HAT 12">
    <location>
        <begin position="697"/>
        <end position="731"/>
    </location>
</feature>
<sequence length="798" mass="93271">MEIDKFVKEEDIPFEYGVVRERDNAVSWSRYLATKRSAGDELNLDWLYERCLKEIKDDWHLWKEFLKWRIELLNDCDIFRHKDEYNKISLLFEQCLTSCGKVGDAWIMYMEWVIQFKDLKRIRELLGKALRSMSWEYHEAIWRVVIDFIINELLIDNKRYELSLEDSIYYFVHGEHSTNFDTDLWSSSILQRYSLICDDIEPLLIYIFKTHDWSTIVRVFEKHLSPNLKPSQTSLFELYVSYITSMILVDNSAGVAAVVDQCIELFPFKKGELKTYLIFNLIRQGKITEAELYLEKVISETKDIIEFSVLYDFWIRMEELLTQELIQKMKDDNSEKQRLFANIRLHADTLTSLIKNHTIRLNDLELRREPNNIKLWLERVKLFDTISDKAKVYADAVLTVDYRLQTTPGLLGELWCQYCRLFEEDIEKSEVLLDKATNVPFKFLVDLENVWLYWCEYRLKRSIDDAIKVLSVVLEIPDNHELLLQKFEKGESPAQAAIFSSKRLWAMYLDLLEVKGNYGTAVNAYETAILIKAATPAMFINYALLNESSGHQAEALAVFERSVEIFPPSVSKSIWDIYLDVALKADITKEQKRDIFESAIKLAASGVACVSFFEKYSDFELNLGFHERSVEILHKGAKNISDLESKCTLWEECINRSEKQLDVNHTRKLYEECIETLPNSKAIKFLLPFAILEESRNEVARCRALLDYGSKLLKPAQNEELWDFWRNFETMHGTKDSFKNMLKARRFLEDTMKVNTEEVSRHADSIEFRASTAKISGSGPPSAEDKGYSNTAEIDLGL</sequence>
<comment type="function">
    <text evidence="1">Involved in pre-mRNA splicing and cell cycle progression.</text>
</comment>
<comment type="subunit">
    <text evidence="1">Associated with the spliceosome.</text>
</comment>
<comment type="subcellular location">
    <subcellularLocation>
        <location evidence="1">Nucleus</location>
    </subcellularLocation>
</comment>
<comment type="similarity">
    <text evidence="2">Belongs to the crooked-neck family.</text>
</comment>
<reference key="1">
    <citation type="journal article" date="2004" name="Nature">
        <title>Genome evolution in yeasts.</title>
        <authorList>
            <person name="Dujon B."/>
            <person name="Sherman D."/>
            <person name="Fischer G."/>
            <person name="Durrens P."/>
            <person name="Casaregola S."/>
            <person name="Lafontaine I."/>
            <person name="de Montigny J."/>
            <person name="Marck C."/>
            <person name="Neuveglise C."/>
            <person name="Talla E."/>
            <person name="Goffard N."/>
            <person name="Frangeul L."/>
            <person name="Aigle M."/>
            <person name="Anthouard V."/>
            <person name="Babour A."/>
            <person name="Barbe V."/>
            <person name="Barnay S."/>
            <person name="Blanchin S."/>
            <person name="Beckerich J.-M."/>
            <person name="Beyne E."/>
            <person name="Bleykasten C."/>
            <person name="Boisrame A."/>
            <person name="Boyer J."/>
            <person name="Cattolico L."/>
            <person name="Confanioleri F."/>
            <person name="de Daruvar A."/>
            <person name="Despons L."/>
            <person name="Fabre E."/>
            <person name="Fairhead C."/>
            <person name="Ferry-Dumazet H."/>
            <person name="Groppi A."/>
            <person name="Hantraye F."/>
            <person name="Hennequin C."/>
            <person name="Jauniaux N."/>
            <person name="Joyet P."/>
            <person name="Kachouri R."/>
            <person name="Kerrest A."/>
            <person name="Koszul R."/>
            <person name="Lemaire M."/>
            <person name="Lesur I."/>
            <person name="Ma L."/>
            <person name="Muller H."/>
            <person name="Nicaud J.-M."/>
            <person name="Nikolski M."/>
            <person name="Oztas S."/>
            <person name="Ozier-Kalogeropoulos O."/>
            <person name="Pellenz S."/>
            <person name="Potier S."/>
            <person name="Richard G.-F."/>
            <person name="Straub M.-L."/>
            <person name="Suleau A."/>
            <person name="Swennen D."/>
            <person name="Tekaia F."/>
            <person name="Wesolowski-Louvel M."/>
            <person name="Westhof E."/>
            <person name="Wirth B."/>
            <person name="Zeniou-Meyer M."/>
            <person name="Zivanovic Y."/>
            <person name="Bolotin-Fukuhara M."/>
            <person name="Thierry A."/>
            <person name="Bouchier C."/>
            <person name="Caudron B."/>
            <person name="Scarpelli C."/>
            <person name="Gaillardin C."/>
            <person name="Weissenbach J."/>
            <person name="Wincker P."/>
            <person name="Souciet J.-L."/>
        </authorList>
    </citation>
    <scope>NUCLEOTIDE SEQUENCE [LARGE SCALE GENOMIC DNA]</scope>
    <source>
        <strain>ATCC 8585 / CBS 2359 / DSM 70799 / NBRC 1267 / NRRL Y-1140 / WM37</strain>
    </source>
</reference>
<protein>
    <recommendedName>
        <fullName>Pre-mRNA-splicing factor SYF1</fullName>
    </recommendedName>
</protein>
<gene>
    <name type="primary">SYF1</name>
    <name type="ordered locus">KLLA0A01969g</name>
</gene>
<proteinExistence type="inferred from homology"/>
<evidence type="ECO:0000250" key="1"/>
<evidence type="ECO:0000305" key="2"/>
<organism>
    <name type="scientific">Kluyveromyces lactis (strain ATCC 8585 / CBS 2359 / DSM 70799 / NBRC 1267 / NRRL Y-1140 / WM37)</name>
    <name type="common">Yeast</name>
    <name type="synonym">Candida sphaerica</name>
    <dbReference type="NCBI Taxonomy" id="284590"/>
    <lineage>
        <taxon>Eukaryota</taxon>
        <taxon>Fungi</taxon>
        <taxon>Dikarya</taxon>
        <taxon>Ascomycota</taxon>
        <taxon>Saccharomycotina</taxon>
        <taxon>Saccharomycetes</taxon>
        <taxon>Saccharomycetales</taxon>
        <taxon>Saccharomycetaceae</taxon>
        <taxon>Kluyveromyces</taxon>
    </lineage>
</organism>
<accession>Q6CYA2</accession>
<keyword id="KW-0507">mRNA processing</keyword>
<keyword id="KW-0508">mRNA splicing</keyword>
<keyword id="KW-0539">Nucleus</keyword>
<keyword id="KW-1185">Reference proteome</keyword>
<keyword id="KW-0677">Repeat</keyword>
<keyword id="KW-0747">Spliceosome</keyword>